<comment type="function">
    <text evidence="1">This phospholipase A2 inhibitor binds directly phospholipase A2 in the presence or absence of calcium.</text>
</comment>
<comment type="subunit">
    <text evidence="2">Homotrimer; non-covalently linked.</text>
</comment>
<comment type="subcellular location">
    <subcellularLocation>
        <location evidence="7">Secreted</location>
    </subcellularLocation>
    <text evidence="6">Secreted in plasma.</text>
</comment>
<comment type="tissue specificity">
    <text evidence="7">Expressed by the liver.</text>
</comment>
<comment type="similarity">
    <text evidence="6">Belongs to the alpha-type phospholipase A2 inhibitor family.</text>
</comment>
<organism>
    <name type="scientific">Bothrops alternatus</name>
    <name type="common">Urutu</name>
    <name type="synonym">Rhinocerophis alternatus</name>
    <dbReference type="NCBI Taxonomy" id="64174"/>
    <lineage>
        <taxon>Eukaryota</taxon>
        <taxon>Metazoa</taxon>
        <taxon>Chordata</taxon>
        <taxon>Craniata</taxon>
        <taxon>Vertebrata</taxon>
        <taxon>Euteleostomi</taxon>
        <taxon>Lepidosauria</taxon>
        <taxon>Squamata</taxon>
        <taxon>Bifurcata</taxon>
        <taxon>Unidentata</taxon>
        <taxon>Episquamata</taxon>
        <taxon>Toxicofera</taxon>
        <taxon>Serpentes</taxon>
        <taxon>Colubroidea</taxon>
        <taxon>Viperidae</taxon>
        <taxon>Crotalinae</taxon>
        <taxon>Bothrops</taxon>
    </lineage>
</organism>
<reference key="1">
    <citation type="submission" date="2008-01" db="EMBL/GenBank/DDBJ databases">
        <title>A profile of the phospholipase A2 inhibitors of the alpha class prospected in Brazilian Crotalidae snakes: structural and phylogenetic analysis.</title>
        <authorList>
            <person name="Estevao-Costa M.I."/>
            <person name="Costa M.A.F."/>
            <person name="Mudado M.A."/>
            <person name="Franco G.R."/>
            <person name="Fortes-Dias C.L."/>
        </authorList>
    </citation>
    <scope>NUCLEOTIDE SEQUENCE [MRNA]</scope>
    <source>
        <tissue>Liver</tissue>
    </source>
</reference>
<protein>
    <recommendedName>
        <fullName>Phospholipase A2 inhibitor</fullName>
        <shortName>alpha-PLI</shortName>
    </recommendedName>
</protein>
<evidence type="ECO:0000250" key="1"/>
<evidence type="ECO:0000250" key="2">
    <source>
        <dbReference type="UniProtKB" id="A1XRN2"/>
    </source>
</evidence>
<evidence type="ECO:0000250" key="3">
    <source>
        <dbReference type="UniProtKB" id="P21755"/>
    </source>
</evidence>
<evidence type="ECO:0000255" key="4"/>
<evidence type="ECO:0000255" key="5">
    <source>
        <dbReference type="PROSITE-ProRule" id="PRU00040"/>
    </source>
</evidence>
<evidence type="ECO:0000305" key="6"/>
<evidence type="ECO:0000305" key="7">
    <source ref="1"/>
</evidence>
<accession>B1A4M7</accession>
<feature type="signal peptide" evidence="1">
    <location>
        <begin position="1"/>
        <end position="19"/>
    </location>
</feature>
<feature type="chain" id="PRO_5000311718" description="Phospholipase A2 inhibitor">
    <location>
        <begin position="20"/>
        <end position="166"/>
    </location>
</feature>
<feature type="domain" description="C-type lectin" evidence="5">
    <location>
        <begin position="46"/>
        <end position="161"/>
    </location>
</feature>
<feature type="glycosylation site" description="N-linked (GlcNAc...) asparagine" evidence="4">
    <location>
        <position position="61"/>
    </location>
</feature>
<feature type="glycosylation site" description="N-linked (GlcNAc...) asparagine" evidence="4">
    <location>
        <position position="122"/>
    </location>
</feature>
<feature type="disulfide bond" evidence="3">
    <location>
        <begin position="83"/>
        <end position="160"/>
    </location>
</feature>
<feature type="disulfide bond" evidence="3">
    <location>
        <begin position="138"/>
        <end position="152"/>
    </location>
</feature>
<proteinExistence type="evidence at transcript level"/>
<sequence length="166" mass="18406">MRLILLSGLLLLGIFLANGHEQDPDGKLLNSLIDALMHLQREFAKLRGAFLTVYKARSFGNGSERLYVTNKEIKNFEALRQICEQAGGHIPSPQLENQNKAFANVLERHNKEAYLVVGDSANFTNWAAGEPNKAAGACVKADTHGSWHSTSCDDNLLVVCEFYFIL</sequence>
<keyword id="KW-0106">Calcium</keyword>
<keyword id="KW-1015">Disulfide bond</keyword>
<keyword id="KW-0325">Glycoprotein</keyword>
<keyword id="KW-0430">Lectin</keyword>
<keyword id="KW-0593">Phospholipase A2 inhibitor</keyword>
<keyword id="KW-0964">Secreted</keyword>
<keyword id="KW-0732">Signal</keyword>
<name>PLIA_BOTAL</name>
<dbReference type="EMBL" id="EU421901">
    <property type="protein sequence ID" value="ABZ82318.1"/>
    <property type="molecule type" value="mRNA"/>
</dbReference>
<dbReference type="EMBL" id="EU421902">
    <property type="protein sequence ID" value="ABZ82319.1"/>
    <property type="molecule type" value="mRNA"/>
</dbReference>
<dbReference type="EMBL" id="EU421903">
    <property type="protein sequence ID" value="ABZ82320.1"/>
    <property type="molecule type" value="mRNA"/>
</dbReference>
<dbReference type="EMBL" id="EU421904">
    <property type="protein sequence ID" value="ABZ82321.1"/>
    <property type="molecule type" value="mRNA"/>
</dbReference>
<dbReference type="EMBL" id="EU421905">
    <property type="protein sequence ID" value="ABZ82322.1"/>
    <property type="molecule type" value="mRNA"/>
</dbReference>
<dbReference type="SMR" id="B1A4M7"/>
<dbReference type="GO" id="GO:0005576">
    <property type="term" value="C:extracellular region"/>
    <property type="evidence" value="ECO:0007669"/>
    <property type="project" value="UniProtKB-SubCell"/>
</dbReference>
<dbReference type="GO" id="GO:0030246">
    <property type="term" value="F:carbohydrate binding"/>
    <property type="evidence" value="ECO:0007669"/>
    <property type="project" value="UniProtKB-KW"/>
</dbReference>
<dbReference type="GO" id="GO:0019834">
    <property type="term" value="F:phospholipase A2 inhibitor activity"/>
    <property type="evidence" value="ECO:0007669"/>
    <property type="project" value="UniProtKB-KW"/>
</dbReference>
<dbReference type="Gene3D" id="3.10.100.10">
    <property type="entry name" value="Mannose-Binding Protein A, subunit A"/>
    <property type="match status" value="1"/>
</dbReference>
<dbReference type="InterPro" id="IPR001304">
    <property type="entry name" value="C-type_lectin-like"/>
</dbReference>
<dbReference type="InterPro" id="IPR016186">
    <property type="entry name" value="C-type_lectin-like/link_sf"/>
</dbReference>
<dbReference type="InterPro" id="IPR018378">
    <property type="entry name" value="C-type_lectin_CS"/>
</dbReference>
<dbReference type="InterPro" id="IPR016187">
    <property type="entry name" value="CTDL_fold"/>
</dbReference>
<dbReference type="Pfam" id="PF00059">
    <property type="entry name" value="Lectin_C"/>
    <property type="match status" value="1"/>
</dbReference>
<dbReference type="SUPFAM" id="SSF56436">
    <property type="entry name" value="C-type lectin-like"/>
    <property type="match status" value="1"/>
</dbReference>
<dbReference type="PROSITE" id="PS00615">
    <property type="entry name" value="C_TYPE_LECTIN_1"/>
    <property type="match status" value="1"/>
</dbReference>
<dbReference type="PROSITE" id="PS50041">
    <property type="entry name" value="C_TYPE_LECTIN_2"/>
    <property type="match status" value="1"/>
</dbReference>